<name>RHAD_KLEP7</name>
<protein>
    <recommendedName>
        <fullName evidence="1">Rhamnulose-1-phosphate aldolase</fullName>
        <ecNumber evidence="1">4.1.2.19</ecNumber>
    </recommendedName>
</protein>
<evidence type="ECO:0000255" key="1">
    <source>
        <dbReference type="HAMAP-Rule" id="MF_00770"/>
    </source>
</evidence>
<reference key="1">
    <citation type="submission" date="2006-09" db="EMBL/GenBank/DDBJ databases">
        <authorList>
            <consortium name="The Klebsiella pneumonia Genome Sequencing Project"/>
            <person name="McClelland M."/>
            <person name="Sanderson E.K."/>
            <person name="Spieth J."/>
            <person name="Clifton W.S."/>
            <person name="Latreille P."/>
            <person name="Sabo A."/>
            <person name="Pepin K."/>
            <person name="Bhonagiri V."/>
            <person name="Porwollik S."/>
            <person name="Ali J."/>
            <person name="Wilson R.K."/>
        </authorList>
    </citation>
    <scope>NUCLEOTIDE SEQUENCE [LARGE SCALE GENOMIC DNA]</scope>
    <source>
        <strain>ATCC 700721 / MGH 78578</strain>
    </source>
</reference>
<gene>
    <name evidence="1" type="primary">rhaD</name>
    <name type="ordered locus">KPN78578_41660</name>
    <name type="ORF">KPN_04211</name>
</gene>
<feature type="chain" id="PRO_1000017340" description="Rhamnulose-1-phosphate aldolase">
    <location>
        <begin position="1"/>
        <end position="276"/>
    </location>
</feature>
<feature type="active site" evidence="1">
    <location>
        <position position="117"/>
    </location>
</feature>
<feature type="binding site" evidence="1">
    <location>
        <position position="141"/>
    </location>
    <ligand>
        <name>Zn(2+)</name>
        <dbReference type="ChEBI" id="CHEBI:29105"/>
    </ligand>
</feature>
<feature type="binding site" evidence="1">
    <location>
        <position position="143"/>
    </location>
    <ligand>
        <name>Zn(2+)</name>
        <dbReference type="ChEBI" id="CHEBI:29105"/>
    </ligand>
</feature>
<feature type="binding site" evidence="1">
    <location>
        <position position="212"/>
    </location>
    <ligand>
        <name>Zn(2+)</name>
        <dbReference type="ChEBI" id="CHEBI:29105"/>
    </ligand>
</feature>
<sequence length="276" mass="30388">MQTIIDAWFVQGMIKATSDAWLKGWDERNGGNLTLRLDEADIEPYAADFHAKPRYIALSQPMPTLANQPFIVTGSGKFFRNVQLDPAANLGVVKVDSDGAGYHILWGLTEDAVPTSELPAHFLSHSERIKLTGGKDRVIMHCHATNLIALTYVLENHSDLFTRKLWEGSTECLVVFPDGVGILPWMVPGTDEIGQATAETMQKHSLVLWPFHGVFGSGPTLDETFGLIDTAEKSAEVLVKVLSMGGMKQTITRDELIALGKRFNVQPLQSALDLYP</sequence>
<comment type="function">
    <text evidence="1">Catalyzes the reversible cleavage of L-rhamnulose-1-phosphate to dihydroxyacetone phosphate (DHAP) and L-lactaldehyde.</text>
</comment>
<comment type="catalytic activity">
    <reaction evidence="1">
        <text>L-rhamnulose 1-phosphate = (S)-lactaldehyde + dihydroxyacetone phosphate</text>
        <dbReference type="Rhea" id="RHEA:19689"/>
        <dbReference type="ChEBI" id="CHEBI:18041"/>
        <dbReference type="ChEBI" id="CHEBI:57642"/>
        <dbReference type="ChEBI" id="CHEBI:58313"/>
        <dbReference type="EC" id="4.1.2.19"/>
    </reaction>
</comment>
<comment type="cofactor">
    <cofactor evidence="1">
        <name>Zn(2+)</name>
        <dbReference type="ChEBI" id="CHEBI:29105"/>
    </cofactor>
    <text evidence="1">Binds 1 zinc ion per subunit.</text>
</comment>
<comment type="pathway">
    <text evidence="1">Carbohydrate degradation; L-rhamnose degradation; glycerone phosphate from L-rhamnose: step 3/3.</text>
</comment>
<comment type="subunit">
    <text evidence="1">Homotetramer.</text>
</comment>
<comment type="subcellular location">
    <subcellularLocation>
        <location evidence="1">Cytoplasm</location>
    </subcellularLocation>
</comment>
<comment type="similarity">
    <text evidence="1">Belongs to the aldolase class II family. RhaD subfamily.</text>
</comment>
<organism>
    <name type="scientific">Klebsiella pneumoniae subsp. pneumoniae (strain ATCC 700721 / MGH 78578)</name>
    <dbReference type="NCBI Taxonomy" id="272620"/>
    <lineage>
        <taxon>Bacteria</taxon>
        <taxon>Pseudomonadati</taxon>
        <taxon>Pseudomonadota</taxon>
        <taxon>Gammaproteobacteria</taxon>
        <taxon>Enterobacterales</taxon>
        <taxon>Enterobacteriaceae</taxon>
        <taxon>Klebsiella/Raoultella group</taxon>
        <taxon>Klebsiella</taxon>
        <taxon>Klebsiella pneumoniae complex</taxon>
    </lineage>
</organism>
<keyword id="KW-0963">Cytoplasm</keyword>
<keyword id="KW-0456">Lyase</keyword>
<keyword id="KW-0479">Metal-binding</keyword>
<keyword id="KW-0684">Rhamnose metabolism</keyword>
<keyword id="KW-0862">Zinc</keyword>
<proteinExistence type="inferred from homology"/>
<dbReference type="EC" id="4.1.2.19" evidence="1"/>
<dbReference type="EMBL" id="CP000647">
    <property type="protein sequence ID" value="ABR79590.1"/>
    <property type="molecule type" value="Genomic_DNA"/>
</dbReference>
<dbReference type="RefSeq" id="WP_002882882.1">
    <property type="nucleotide sequence ID" value="NC_009648.1"/>
</dbReference>
<dbReference type="SMR" id="A6TGA6"/>
<dbReference type="STRING" id="272620.KPN_04211"/>
<dbReference type="PaxDb" id="272620-KPN_04211"/>
<dbReference type="EnsemblBacteria" id="ABR79590">
    <property type="protein sequence ID" value="ABR79590"/>
    <property type="gene ID" value="KPN_04211"/>
</dbReference>
<dbReference type="KEGG" id="kpn:KPN_04211"/>
<dbReference type="HOGENOM" id="CLU_076831_0_0_6"/>
<dbReference type="UniPathway" id="UPA00541">
    <property type="reaction ID" value="UER00603"/>
</dbReference>
<dbReference type="Proteomes" id="UP000000265">
    <property type="component" value="Chromosome"/>
</dbReference>
<dbReference type="GO" id="GO:0005829">
    <property type="term" value="C:cytosol"/>
    <property type="evidence" value="ECO:0007669"/>
    <property type="project" value="TreeGrafter"/>
</dbReference>
<dbReference type="GO" id="GO:0046872">
    <property type="term" value="F:metal ion binding"/>
    <property type="evidence" value="ECO:0007669"/>
    <property type="project" value="UniProtKB-KW"/>
</dbReference>
<dbReference type="GO" id="GO:0008994">
    <property type="term" value="F:rhamnulose-1-phosphate aldolase activity"/>
    <property type="evidence" value="ECO:0007669"/>
    <property type="project" value="UniProtKB-UniRule"/>
</dbReference>
<dbReference type="GO" id="GO:0019323">
    <property type="term" value="P:pentose catabolic process"/>
    <property type="evidence" value="ECO:0007669"/>
    <property type="project" value="TreeGrafter"/>
</dbReference>
<dbReference type="GO" id="GO:0019301">
    <property type="term" value="P:rhamnose catabolic process"/>
    <property type="evidence" value="ECO:0007669"/>
    <property type="project" value="UniProtKB-UniRule"/>
</dbReference>
<dbReference type="CDD" id="cd00398">
    <property type="entry name" value="Aldolase_II"/>
    <property type="match status" value="1"/>
</dbReference>
<dbReference type="FunFam" id="3.40.225.10:FF:000006">
    <property type="entry name" value="Rhamnulose-1-phosphate aldolase"/>
    <property type="match status" value="1"/>
</dbReference>
<dbReference type="Gene3D" id="3.40.225.10">
    <property type="entry name" value="Class II aldolase/adducin N-terminal domain"/>
    <property type="match status" value="1"/>
</dbReference>
<dbReference type="HAMAP" id="MF_00770">
    <property type="entry name" value="RhaD"/>
    <property type="match status" value="1"/>
</dbReference>
<dbReference type="InterPro" id="IPR050197">
    <property type="entry name" value="Aldolase_class_II_sugar_metab"/>
</dbReference>
<dbReference type="InterPro" id="IPR001303">
    <property type="entry name" value="Aldolase_II/adducin_N"/>
</dbReference>
<dbReference type="InterPro" id="IPR036409">
    <property type="entry name" value="Aldolase_II/adducin_N_sf"/>
</dbReference>
<dbReference type="InterPro" id="IPR013447">
    <property type="entry name" value="Rhamnulose-1-P_Aldolase"/>
</dbReference>
<dbReference type="NCBIfam" id="NF002963">
    <property type="entry name" value="PRK03634.1"/>
    <property type="match status" value="1"/>
</dbReference>
<dbReference type="NCBIfam" id="TIGR02624">
    <property type="entry name" value="rhamnu_1P_ald"/>
    <property type="match status" value="1"/>
</dbReference>
<dbReference type="PANTHER" id="PTHR22789">
    <property type="entry name" value="FUCULOSE PHOSPHATE ALDOLASE"/>
    <property type="match status" value="1"/>
</dbReference>
<dbReference type="PANTHER" id="PTHR22789:SF16">
    <property type="entry name" value="RHAMNULOSE-1-PHOSPHATE ALDOLASE"/>
    <property type="match status" value="1"/>
</dbReference>
<dbReference type="Pfam" id="PF00596">
    <property type="entry name" value="Aldolase_II"/>
    <property type="match status" value="1"/>
</dbReference>
<dbReference type="SMART" id="SM01007">
    <property type="entry name" value="Aldolase_II"/>
    <property type="match status" value="1"/>
</dbReference>
<dbReference type="SUPFAM" id="SSF53639">
    <property type="entry name" value="AraD/HMP-PK domain-like"/>
    <property type="match status" value="1"/>
</dbReference>
<accession>A6TGA6</accession>